<gene>
    <name evidence="7" type="primary">Pgp</name>
</gene>
<feature type="chain" id="PRO_0000435883" description="Glycerol-3-phosphate phosphatase">
    <location>
        <begin position="1"/>
        <end position="321"/>
    </location>
</feature>
<feature type="active site" description="Nucleophile" evidence="3">
    <location>
        <position position="34"/>
    </location>
</feature>
<feature type="active site" description="Proton donor" evidence="3">
    <location>
        <position position="36"/>
    </location>
</feature>
<feature type="binding site" evidence="2">
    <location>
        <position position="34"/>
    </location>
    <ligand>
        <name>Mg(2+)</name>
        <dbReference type="ChEBI" id="CHEBI:18420"/>
    </ligand>
</feature>
<feature type="binding site" evidence="2">
    <location>
        <position position="36"/>
    </location>
    <ligand>
        <name>Mg(2+)</name>
        <dbReference type="ChEBI" id="CHEBI:18420"/>
    </ligand>
</feature>
<feature type="binding site" evidence="2">
    <location>
        <position position="260"/>
    </location>
    <ligand>
        <name>Mg(2+)</name>
        <dbReference type="ChEBI" id="CHEBI:18420"/>
    </ligand>
</feature>
<feature type="site" description="Important for substrate specificity" evidence="3">
    <location>
        <position position="204"/>
    </location>
</feature>
<name>PGP_RAT</name>
<organism>
    <name type="scientific">Rattus norvegicus</name>
    <name type="common">Rat</name>
    <dbReference type="NCBI Taxonomy" id="10116"/>
    <lineage>
        <taxon>Eukaryota</taxon>
        <taxon>Metazoa</taxon>
        <taxon>Chordata</taxon>
        <taxon>Craniata</taxon>
        <taxon>Vertebrata</taxon>
        <taxon>Euteleostomi</taxon>
        <taxon>Mammalia</taxon>
        <taxon>Eutheria</taxon>
        <taxon>Euarchontoglires</taxon>
        <taxon>Glires</taxon>
        <taxon>Rodentia</taxon>
        <taxon>Myomorpha</taxon>
        <taxon>Muroidea</taxon>
        <taxon>Muridae</taxon>
        <taxon>Murinae</taxon>
        <taxon>Rattus</taxon>
    </lineage>
</organism>
<protein>
    <recommendedName>
        <fullName evidence="6">Glycerol-3-phosphate phosphatase</fullName>
        <shortName evidence="5">G3PP</shortName>
        <ecNumber evidence="4">3.1.3.21</ecNumber>
    </recommendedName>
    <alternativeName>
        <fullName evidence="5">Aspartate-based ubiquitous Mg(2+)-dependent phosphatase</fullName>
        <shortName evidence="5">AUM</shortName>
        <ecNumber evidence="3">3.1.3.48</ecNumber>
    </alternativeName>
    <alternativeName>
        <fullName evidence="5">Phosphoglycolate phosphatase</fullName>
        <shortName evidence="5">PGP</shortName>
    </alternativeName>
</protein>
<sequence>MAEAEAGGDEVRCVRLSAERAKLLLAEVDTLLFDCDGVLWRGETAVPGAPETLRALRARGKRLGFITNNSSKTRTAYAEKLRRLGFGGPMGPEAGLEVFGTAYCSALYLRQRLAGVPDPKAYVLGSPALAAELEAVGVTSVGVGPDVLHGDGPSDWLAVPLEPDVRAVVVGFDPHFSYMKLTKAVRYLQQPDCLLVGTNMDNRLPLENGRFIAGTGCLVRAVEMAAQRQADIIGKPSRFIFDCVSQEYGINPERTVMVGDRLDTDILLGSTCSLKTILTLTGVSSLEDVKSNQESDCMFKKKMVPDFYVDSIADLLPALQG</sequence>
<reference key="1">
    <citation type="journal article" date="2004" name="Nature">
        <title>Genome sequence of the Brown Norway rat yields insights into mammalian evolution.</title>
        <authorList>
            <person name="Gibbs R.A."/>
            <person name="Weinstock G.M."/>
            <person name="Metzker M.L."/>
            <person name="Muzny D.M."/>
            <person name="Sodergren E.J."/>
            <person name="Scherer S."/>
            <person name="Scott G."/>
            <person name="Steffen D."/>
            <person name="Worley K.C."/>
            <person name="Burch P.E."/>
            <person name="Okwuonu G."/>
            <person name="Hines S."/>
            <person name="Lewis L."/>
            <person name="Deramo C."/>
            <person name="Delgado O."/>
            <person name="Dugan-Rocha S."/>
            <person name="Miner G."/>
            <person name="Morgan M."/>
            <person name="Hawes A."/>
            <person name="Gill R."/>
            <person name="Holt R.A."/>
            <person name="Adams M.D."/>
            <person name="Amanatides P.G."/>
            <person name="Baden-Tillson H."/>
            <person name="Barnstead M."/>
            <person name="Chin S."/>
            <person name="Evans C.A."/>
            <person name="Ferriera S."/>
            <person name="Fosler C."/>
            <person name="Glodek A."/>
            <person name="Gu Z."/>
            <person name="Jennings D."/>
            <person name="Kraft C.L."/>
            <person name="Nguyen T."/>
            <person name="Pfannkoch C.M."/>
            <person name="Sitter C."/>
            <person name="Sutton G.G."/>
            <person name="Venter J.C."/>
            <person name="Woodage T."/>
            <person name="Smith D."/>
            <person name="Lee H.-M."/>
            <person name="Gustafson E."/>
            <person name="Cahill P."/>
            <person name="Kana A."/>
            <person name="Doucette-Stamm L."/>
            <person name="Weinstock K."/>
            <person name="Fechtel K."/>
            <person name="Weiss R.B."/>
            <person name="Dunn D.M."/>
            <person name="Green E.D."/>
            <person name="Blakesley R.W."/>
            <person name="Bouffard G.G."/>
            <person name="De Jong P.J."/>
            <person name="Osoegawa K."/>
            <person name="Zhu B."/>
            <person name="Marra M."/>
            <person name="Schein J."/>
            <person name="Bosdet I."/>
            <person name="Fjell C."/>
            <person name="Jones S."/>
            <person name="Krzywinski M."/>
            <person name="Mathewson C."/>
            <person name="Siddiqui A."/>
            <person name="Wye N."/>
            <person name="McPherson J."/>
            <person name="Zhao S."/>
            <person name="Fraser C.M."/>
            <person name="Shetty J."/>
            <person name="Shatsman S."/>
            <person name="Geer K."/>
            <person name="Chen Y."/>
            <person name="Abramzon S."/>
            <person name="Nierman W.C."/>
            <person name="Havlak P.H."/>
            <person name="Chen R."/>
            <person name="Durbin K.J."/>
            <person name="Egan A."/>
            <person name="Ren Y."/>
            <person name="Song X.-Z."/>
            <person name="Li B."/>
            <person name="Liu Y."/>
            <person name="Qin X."/>
            <person name="Cawley S."/>
            <person name="Cooney A.J."/>
            <person name="D'Souza L.M."/>
            <person name="Martin K."/>
            <person name="Wu J.Q."/>
            <person name="Gonzalez-Garay M.L."/>
            <person name="Jackson A.R."/>
            <person name="Kalafus K.J."/>
            <person name="McLeod M.P."/>
            <person name="Milosavljevic A."/>
            <person name="Virk D."/>
            <person name="Volkov A."/>
            <person name="Wheeler D.A."/>
            <person name="Zhang Z."/>
            <person name="Bailey J.A."/>
            <person name="Eichler E.E."/>
            <person name="Tuzun E."/>
            <person name="Birney E."/>
            <person name="Mongin E."/>
            <person name="Ureta-Vidal A."/>
            <person name="Woodwark C."/>
            <person name="Zdobnov E."/>
            <person name="Bork P."/>
            <person name="Suyama M."/>
            <person name="Torrents D."/>
            <person name="Alexandersson M."/>
            <person name="Trask B.J."/>
            <person name="Young J.M."/>
            <person name="Huang H."/>
            <person name="Wang H."/>
            <person name="Xing H."/>
            <person name="Daniels S."/>
            <person name="Gietzen D."/>
            <person name="Schmidt J."/>
            <person name="Stevens K."/>
            <person name="Vitt U."/>
            <person name="Wingrove J."/>
            <person name="Camara F."/>
            <person name="Mar Alba M."/>
            <person name="Abril J.F."/>
            <person name="Guigo R."/>
            <person name="Smit A."/>
            <person name="Dubchak I."/>
            <person name="Rubin E.M."/>
            <person name="Couronne O."/>
            <person name="Poliakov A."/>
            <person name="Huebner N."/>
            <person name="Ganten D."/>
            <person name="Goesele C."/>
            <person name="Hummel O."/>
            <person name="Kreitler T."/>
            <person name="Lee Y.-A."/>
            <person name="Monti J."/>
            <person name="Schulz H."/>
            <person name="Zimdahl H."/>
            <person name="Himmelbauer H."/>
            <person name="Lehrach H."/>
            <person name="Jacob H.J."/>
            <person name="Bromberg S."/>
            <person name="Gullings-Handley J."/>
            <person name="Jensen-Seaman M.I."/>
            <person name="Kwitek A.E."/>
            <person name="Lazar J."/>
            <person name="Pasko D."/>
            <person name="Tonellato P.J."/>
            <person name="Twigger S."/>
            <person name="Ponting C.P."/>
            <person name="Duarte J.M."/>
            <person name="Rice S."/>
            <person name="Goodstadt L."/>
            <person name="Beatson S.A."/>
            <person name="Emes R.D."/>
            <person name="Winter E.E."/>
            <person name="Webber C."/>
            <person name="Brandt P."/>
            <person name="Nyakatura G."/>
            <person name="Adetobi M."/>
            <person name="Chiaromonte F."/>
            <person name="Elnitski L."/>
            <person name="Eswara P."/>
            <person name="Hardison R.C."/>
            <person name="Hou M."/>
            <person name="Kolbe D."/>
            <person name="Makova K."/>
            <person name="Miller W."/>
            <person name="Nekrutenko A."/>
            <person name="Riemer C."/>
            <person name="Schwartz S."/>
            <person name="Taylor J."/>
            <person name="Yang S."/>
            <person name="Zhang Y."/>
            <person name="Lindpaintner K."/>
            <person name="Andrews T.D."/>
            <person name="Caccamo M."/>
            <person name="Clamp M."/>
            <person name="Clarke L."/>
            <person name="Curwen V."/>
            <person name="Durbin R.M."/>
            <person name="Eyras E."/>
            <person name="Searle S.M."/>
            <person name="Cooper G.M."/>
            <person name="Batzoglou S."/>
            <person name="Brudno M."/>
            <person name="Sidow A."/>
            <person name="Stone E.A."/>
            <person name="Payseur B.A."/>
            <person name="Bourque G."/>
            <person name="Lopez-Otin C."/>
            <person name="Puente X.S."/>
            <person name="Chakrabarti K."/>
            <person name="Chatterji S."/>
            <person name="Dewey C."/>
            <person name="Pachter L."/>
            <person name="Bray N."/>
            <person name="Yap V.B."/>
            <person name="Caspi A."/>
            <person name="Tesler G."/>
            <person name="Pevzner P.A."/>
            <person name="Haussler D."/>
            <person name="Roskin K.M."/>
            <person name="Baertsch R."/>
            <person name="Clawson H."/>
            <person name="Furey T.S."/>
            <person name="Hinrichs A.S."/>
            <person name="Karolchik D."/>
            <person name="Kent W.J."/>
            <person name="Rosenbloom K.R."/>
            <person name="Trumbower H."/>
            <person name="Weirauch M."/>
            <person name="Cooper D.N."/>
            <person name="Stenson P.D."/>
            <person name="Ma B."/>
            <person name="Brent M."/>
            <person name="Arumugam M."/>
            <person name="Shteynberg D."/>
            <person name="Copley R.R."/>
            <person name="Taylor M.S."/>
            <person name="Riethman H."/>
            <person name="Mudunuri U."/>
            <person name="Peterson J."/>
            <person name="Guyer M."/>
            <person name="Felsenfeld A."/>
            <person name="Old S."/>
            <person name="Mockrin S."/>
            <person name="Collins F.S."/>
        </authorList>
    </citation>
    <scope>NUCLEOTIDE SEQUENCE [LARGE SCALE GENOMIC DNA]</scope>
    <source>
        <strain>Brown Norway</strain>
    </source>
</reference>
<reference key="2">
    <citation type="submission" date="2005-07" db="EMBL/GenBank/DDBJ databases">
        <authorList>
            <person name="Mural R.J."/>
            <person name="Adams M.D."/>
            <person name="Myers E.W."/>
            <person name="Smith H.O."/>
            <person name="Venter J.C."/>
        </authorList>
    </citation>
    <scope>NUCLEOTIDE SEQUENCE [LARGE SCALE GENOMIC DNA]</scope>
</reference>
<reference key="3">
    <citation type="journal article" date="2012" name="Nat. Commun.">
        <title>Quantitative maps of protein phosphorylation sites across 14 different rat organs and tissues.</title>
        <authorList>
            <person name="Lundby A."/>
            <person name="Secher A."/>
            <person name="Lage K."/>
            <person name="Nordsborg N.B."/>
            <person name="Dmytriyev A."/>
            <person name="Lundby C."/>
            <person name="Olsen J.V."/>
        </authorList>
    </citation>
    <scope>IDENTIFICATION BY MASS SPECTROMETRY [LARGE SCALE ANALYSIS]</scope>
</reference>
<reference key="4">
    <citation type="journal article" date="2016" name="Proc. Natl. Acad. Sci. U.S.A.">
        <title>Identification of a mammalian glycerol-3-phosphate phosphatase: Role in metabolism and signaling in pancreatic beta-cells and hepatocytes.</title>
        <authorList>
            <person name="Mugabo Y."/>
            <person name="Zhao S."/>
            <person name="Seifried A."/>
            <person name="Gezzar S."/>
            <person name="Al-Mass A."/>
            <person name="Zhang D."/>
            <person name="Lamontagne J."/>
            <person name="Attane C."/>
            <person name="Poursharifi P."/>
            <person name="Iglesias J."/>
            <person name="Joly E."/>
            <person name="Peyot M.L."/>
            <person name="Gohla A."/>
            <person name="Madiraju S.R."/>
            <person name="Prentki M."/>
        </authorList>
    </citation>
    <scope>FUNCTION</scope>
    <scope>CATALYTIC ACTIVITY</scope>
    <scope>BIOPHYSICOCHEMICAL PROPERTIES</scope>
    <scope>TISSUE SPECIFICITY</scope>
</reference>
<proteinExistence type="evidence at protein level"/>
<comment type="function">
    <text evidence="1 3 4">Glycerol-3-phosphate phosphatase hydrolyzing glycerol-3-phosphate into glycerol (PubMed:26755581). Thereby, regulates the cellular levels of glycerol-3-phosphate a metabolic intermediate of glucose, lipid and energy metabolism. Was also shown to have a 2-phosphoglycolate phosphatase activity and a tyrosine-protein phosphatase activity. However, their physiological relevance is unclear (By similarity). In vitro, also has a phosphatase activity toward ADP, ATP, GDP and GTP (By similarity).</text>
</comment>
<comment type="catalytic activity">
    <reaction evidence="3">
        <text>O-phospho-L-tyrosyl-[protein] + H2O = L-tyrosyl-[protein] + phosphate</text>
        <dbReference type="Rhea" id="RHEA:10684"/>
        <dbReference type="Rhea" id="RHEA-COMP:10136"/>
        <dbReference type="Rhea" id="RHEA-COMP:20101"/>
        <dbReference type="ChEBI" id="CHEBI:15377"/>
        <dbReference type="ChEBI" id="CHEBI:43474"/>
        <dbReference type="ChEBI" id="CHEBI:46858"/>
        <dbReference type="ChEBI" id="CHEBI:61978"/>
        <dbReference type="EC" id="3.1.3.48"/>
    </reaction>
</comment>
<comment type="catalytic activity">
    <reaction evidence="4">
        <text>sn-glycerol 1-phosphate + H2O = glycerol + phosphate</text>
        <dbReference type="Rhea" id="RHEA:46084"/>
        <dbReference type="ChEBI" id="CHEBI:15377"/>
        <dbReference type="ChEBI" id="CHEBI:17754"/>
        <dbReference type="ChEBI" id="CHEBI:43474"/>
        <dbReference type="ChEBI" id="CHEBI:57685"/>
        <dbReference type="EC" id="3.1.3.21"/>
    </reaction>
</comment>
<comment type="catalytic activity">
    <reaction evidence="4">
        <text>sn-glycerol 3-phosphate + H2O = glycerol + phosphate</text>
        <dbReference type="Rhea" id="RHEA:66372"/>
        <dbReference type="ChEBI" id="CHEBI:15377"/>
        <dbReference type="ChEBI" id="CHEBI:17754"/>
        <dbReference type="ChEBI" id="CHEBI:43474"/>
        <dbReference type="ChEBI" id="CHEBI:57597"/>
        <dbReference type="EC" id="3.1.3.21"/>
    </reaction>
</comment>
<comment type="cofactor">
    <cofactor evidence="3">
        <name>Mg(2+)</name>
        <dbReference type="ChEBI" id="CHEBI:18420"/>
    </cofactor>
    <text evidence="3">Binds 1 Mg(2+) ion per subunit.</text>
</comment>
<comment type="biophysicochemical properties">
    <kinetics>
        <Vmax evidence="4">47.0 nmol/min/mg enzyme with glycerol-3-phosphate as substrate</Vmax>
    </kinetics>
</comment>
<comment type="subunit">
    <text evidence="3">Homodimer.</text>
</comment>
<comment type="tissue specificity">
    <text evidence="4">Expression was confirmed in liver, adipose tissue, testis and pancreatic islet.</text>
</comment>
<comment type="similarity">
    <text evidence="6">Belongs to the HAD-like hydrolase superfamily. CbbY/CbbZ/Gph/YieH family.</text>
</comment>
<keyword id="KW-0119">Carbohydrate metabolism</keyword>
<keyword id="KW-0378">Hydrolase</keyword>
<keyword id="KW-0460">Magnesium</keyword>
<keyword id="KW-0479">Metal-binding</keyword>
<keyword id="KW-0904">Protein phosphatase</keyword>
<keyword id="KW-1185">Reference proteome</keyword>
<accession>D3ZDK7</accession>
<dbReference type="EC" id="3.1.3.21" evidence="4"/>
<dbReference type="EC" id="3.1.3.48" evidence="3"/>
<dbReference type="EMBL" id="AC103090">
    <property type="status" value="NOT_ANNOTATED_CDS"/>
    <property type="molecule type" value="Genomic_DNA"/>
</dbReference>
<dbReference type="EMBL" id="CH473948">
    <property type="protein sequence ID" value="EDM03833.1"/>
    <property type="molecule type" value="Genomic_DNA"/>
</dbReference>
<dbReference type="RefSeq" id="NP_001162623.1">
    <property type="nucleotide sequence ID" value="NM_001169152.1"/>
</dbReference>
<dbReference type="SMR" id="D3ZDK7"/>
<dbReference type="FunCoup" id="D3ZDK7">
    <property type="interactions" value="1164"/>
</dbReference>
<dbReference type="STRING" id="10116.ENSRNOP00000012720"/>
<dbReference type="PhosphoSitePlus" id="D3ZDK7"/>
<dbReference type="jPOST" id="D3ZDK7"/>
<dbReference type="PaxDb" id="10116-ENSRNOP00000012720"/>
<dbReference type="PeptideAtlas" id="D3ZDK7"/>
<dbReference type="GeneID" id="287115"/>
<dbReference type="KEGG" id="rno:287115"/>
<dbReference type="UCSC" id="RGD:1307773">
    <property type="organism name" value="rat"/>
</dbReference>
<dbReference type="AGR" id="RGD:1307773"/>
<dbReference type="CTD" id="283871"/>
<dbReference type="RGD" id="1307773">
    <property type="gene designation" value="Pgp"/>
</dbReference>
<dbReference type="VEuPathDB" id="HostDB:ENSRNOG00000009536"/>
<dbReference type="eggNOG" id="KOG2882">
    <property type="taxonomic scope" value="Eukaryota"/>
</dbReference>
<dbReference type="HOGENOM" id="CLU_043473_0_1_1"/>
<dbReference type="InParanoid" id="D3ZDK7"/>
<dbReference type="OrthoDB" id="14647at9989"/>
<dbReference type="PhylomeDB" id="D3ZDK7"/>
<dbReference type="TreeFam" id="TF314344"/>
<dbReference type="PRO" id="PR:D3ZDK7"/>
<dbReference type="Proteomes" id="UP000002494">
    <property type="component" value="Chromosome 10"/>
</dbReference>
<dbReference type="Proteomes" id="UP000234681">
    <property type="component" value="Chromosome 10"/>
</dbReference>
<dbReference type="Bgee" id="ENSRNOG00000009536">
    <property type="expression patterns" value="Expressed in testis and 19 other cell types or tissues"/>
</dbReference>
<dbReference type="GO" id="GO:0005737">
    <property type="term" value="C:cytoplasm"/>
    <property type="evidence" value="ECO:0000318"/>
    <property type="project" value="GO_Central"/>
</dbReference>
<dbReference type="GO" id="GO:0005829">
    <property type="term" value="C:cytosol"/>
    <property type="evidence" value="ECO:0000304"/>
    <property type="project" value="Reactome"/>
</dbReference>
<dbReference type="GO" id="GO:0043262">
    <property type="term" value="F:ADP phosphatase activity"/>
    <property type="evidence" value="ECO:0000266"/>
    <property type="project" value="RGD"/>
</dbReference>
<dbReference type="GO" id="GO:0000121">
    <property type="term" value="F:glycerol-1-phosphatase activity"/>
    <property type="evidence" value="ECO:0007669"/>
    <property type="project" value="RHEA"/>
</dbReference>
<dbReference type="GO" id="GO:0043136">
    <property type="term" value="F:glycerol-3-phosphatase activity"/>
    <property type="evidence" value="ECO:0000315"/>
    <property type="project" value="UniProtKB"/>
</dbReference>
<dbReference type="GO" id="GO:0000287">
    <property type="term" value="F:magnesium ion binding"/>
    <property type="evidence" value="ECO:0000266"/>
    <property type="project" value="RGD"/>
</dbReference>
<dbReference type="GO" id="GO:0008967">
    <property type="term" value="F:phosphoglycolate phosphatase activity"/>
    <property type="evidence" value="ECO:0000266"/>
    <property type="project" value="RGD"/>
</dbReference>
<dbReference type="GO" id="GO:0004725">
    <property type="term" value="F:protein tyrosine phosphatase activity"/>
    <property type="evidence" value="ECO:0000266"/>
    <property type="project" value="RGD"/>
</dbReference>
<dbReference type="GO" id="GO:0006114">
    <property type="term" value="P:glycerol biosynthetic process"/>
    <property type="evidence" value="ECO:0000314"/>
    <property type="project" value="UniProtKB"/>
</dbReference>
<dbReference type="GO" id="GO:0006650">
    <property type="term" value="P:glycerophospholipid metabolic process"/>
    <property type="evidence" value="ECO:0000315"/>
    <property type="project" value="UniProtKB"/>
</dbReference>
<dbReference type="GO" id="GO:0045721">
    <property type="term" value="P:negative regulation of gluconeogenesis"/>
    <property type="evidence" value="ECO:0000315"/>
    <property type="project" value="UniProtKB"/>
</dbReference>
<dbReference type="CDD" id="cd07510">
    <property type="entry name" value="HAD_Pase_UmpH-like"/>
    <property type="match status" value="1"/>
</dbReference>
<dbReference type="FunFam" id="3.40.50.1000:FF:000123">
    <property type="entry name" value="glycerol-3-phosphate phosphatase"/>
    <property type="match status" value="1"/>
</dbReference>
<dbReference type="Gene3D" id="3.40.50.1000">
    <property type="entry name" value="HAD superfamily/HAD-like"/>
    <property type="match status" value="2"/>
</dbReference>
<dbReference type="InterPro" id="IPR036412">
    <property type="entry name" value="HAD-like_sf"/>
</dbReference>
<dbReference type="InterPro" id="IPR006357">
    <property type="entry name" value="HAD-SF_hydro_IIA"/>
</dbReference>
<dbReference type="InterPro" id="IPR023214">
    <property type="entry name" value="HAD_sf"/>
</dbReference>
<dbReference type="InterPro" id="IPR006349">
    <property type="entry name" value="PGP_euk"/>
</dbReference>
<dbReference type="NCBIfam" id="TIGR01460">
    <property type="entry name" value="HAD-SF-IIA"/>
    <property type="match status" value="1"/>
</dbReference>
<dbReference type="NCBIfam" id="TIGR01452">
    <property type="entry name" value="PGP_euk"/>
    <property type="match status" value="1"/>
</dbReference>
<dbReference type="PANTHER" id="PTHR19288">
    <property type="entry name" value="4-NITROPHENYLPHOSPHATASE-RELATED"/>
    <property type="match status" value="1"/>
</dbReference>
<dbReference type="PANTHER" id="PTHR19288:SF92">
    <property type="entry name" value="GLYCEROL-3-PHOSPHATE PHOSPHATASE"/>
    <property type="match status" value="1"/>
</dbReference>
<dbReference type="Pfam" id="PF13344">
    <property type="entry name" value="Hydrolase_6"/>
    <property type="match status" value="1"/>
</dbReference>
<dbReference type="Pfam" id="PF13242">
    <property type="entry name" value="Hydrolase_like"/>
    <property type="match status" value="1"/>
</dbReference>
<dbReference type="PIRSF" id="PIRSF000915">
    <property type="entry name" value="PGP-type_phosphatase"/>
    <property type="match status" value="1"/>
</dbReference>
<dbReference type="SUPFAM" id="SSF56784">
    <property type="entry name" value="HAD-like"/>
    <property type="match status" value="1"/>
</dbReference>
<evidence type="ECO:0000250" key="1">
    <source>
        <dbReference type="UniProtKB" id="A6NDG6"/>
    </source>
</evidence>
<evidence type="ECO:0000250" key="2">
    <source>
        <dbReference type="UniProtKB" id="P60487"/>
    </source>
</evidence>
<evidence type="ECO:0000250" key="3">
    <source>
        <dbReference type="UniProtKB" id="Q8CHP8"/>
    </source>
</evidence>
<evidence type="ECO:0000269" key="4">
    <source>
    </source>
</evidence>
<evidence type="ECO:0000303" key="5">
    <source>
    </source>
</evidence>
<evidence type="ECO:0000305" key="6"/>
<evidence type="ECO:0000312" key="7">
    <source>
        <dbReference type="RGD" id="1307773"/>
    </source>
</evidence>